<reference key="1">
    <citation type="journal article" date="2007" name="Nat. Biotechnol.">
        <title>Genome sequence and identification of candidate vaccine antigens from the animal pathogen Dichelobacter nodosus.</title>
        <authorList>
            <person name="Myers G.S.A."/>
            <person name="Parker D."/>
            <person name="Al-Hasani K."/>
            <person name="Kennan R.M."/>
            <person name="Seemann T."/>
            <person name="Ren Q."/>
            <person name="Badger J.H."/>
            <person name="Selengut J.D."/>
            <person name="Deboy R.T."/>
            <person name="Tettelin H."/>
            <person name="Boyce J.D."/>
            <person name="McCarl V.P."/>
            <person name="Han X."/>
            <person name="Nelson W.C."/>
            <person name="Madupu R."/>
            <person name="Mohamoud Y."/>
            <person name="Holley T."/>
            <person name="Fedorova N."/>
            <person name="Khouri H."/>
            <person name="Bottomley S.P."/>
            <person name="Whittington R.J."/>
            <person name="Adler B."/>
            <person name="Songer J.G."/>
            <person name="Rood J.I."/>
            <person name="Paulsen I.T."/>
        </authorList>
    </citation>
    <scope>NUCLEOTIDE SEQUENCE [LARGE SCALE GENOMIC DNA]</scope>
    <source>
        <strain>VCS1703A</strain>
    </source>
</reference>
<accession>A5EX48</accession>
<sequence length="729" mass="82425">MDEPLFSCVLPCAKGSEQVLQQEAEQLGVQTLSIAPAVVRGKASLLTFYRLCLWSRTASRVLLVLAHENVDSAEAIYEVARNIAWEDHIAPDDTFAVRFNGLGCGIRNTQFGALKIKDAVVDRLRDIVKRRPDVDAKTPDILLDAHLHKNELTLALDLSGGSLHERGYRQAHGAAPMKETLAATLLYRARWHEFCAQPATLIDPTCGAGTLVLEAAMMAADYAPNLQRQHWGFTRWQNHRPALWNKVIDEAQTRKNAGIAALSDYVFYGYDQNPVVIAAARANAKRLGLEDFVHFAPKRLEDLTADFGARGFVVANPPYGERLGEVQELIPTYAALGHWFKTLPADWEMAVIASNDALLKRMRLRAHKYYQAFNGTIAAQIVHYRRSEQPESQETAAQQKLAQASVGISEQAQMFANRLQKNIQKIRPSAERAQTDAYRIYDQDMPEYAVAIDCYGDAVVIQEYAPPKTIDPQKAQQRLFDVLQVVPEVLALDERSVFLKTRQRQTGKTQYNPAAEKRNEERIVYEGAARFLVNLSDYLDTGLFLDHRPMRRLLFEQAAGKRVLNLFCYTATASVQAALGGASYTTSVDLSPTYLDWAQRNFDLNALSDRHRLQRADVMAWLHSGKSQFDMIFCDPPTFSNTKKEQRVFDVQRDQIALIDGCMQRLAAGGILYFSNNYRGFRLEEALCARYCVQEISENTIDFDFKRRPKIHRVWKIMHRSDGEQSAEK</sequence>
<protein>
    <recommendedName>
        <fullName evidence="1">Ribosomal RNA large subunit methyltransferase K/L</fullName>
    </recommendedName>
    <domain>
        <recommendedName>
            <fullName evidence="1">23S rRNA m2G2445 methyltransferase</fullName>
            <ecNumber evidence="1">2.1.1.173</ecNumber>
        </recommendedName>
        <alternativeName>
            <fullName evidence="1">rRNA (guanine-N(2)-)-methyltransferase RlmL</fullName>
        </alternativeName>
    </domain>
    <domain>
        <recommendedName>
            <fullName evidence="1">23S rRNA m7G2069 methyltransferase</fullName>
            <ecNumber evidence="1">2.1.1.264</ecNumber>
        </recommendedName>
        <alternativeName>
            <fullName evidence="1">rRNA (guanine-N(7)-)-methyltransferase RlmK</fullName>
        </alternativeName>
    </domain>
</protein>
<evidence type="ECO:0000255" key="1">
    <source>
        <dbReference type="HAMAP-Rule" id="MF_01858"/>
    </source>
</evidence>
<proteinExistence type="inferred from homology"/>
<comment type="function">
    <text evidence="1">Specifically methylates the guanine in position 2445 (m2G2445) and the guanine in position 2069 (m7G2069) of 23S rRNA.</text>
</comment>
<comment type="catalytic activity">
    <reaction evidence="1">
        <text>guanosine(2445) in 23S rRNA + S-adenosyl-L-methionine = N(2)-methylguanosine(2445) in 23S rRNA + S-adenosyl-L-homocysteine + H(+)</text>
        <dbReference type="Rhea" id="RHEA:42740"/>
        <dbReference type="Rhea" id="RHEA-COMP:10215"/>
        <dbReference type="Rhea" id="RHEA-COMP:10216"/>
        <dbReference type="ChEBI" id="CHEBI:15378"/>
        <dbReference type="ChEBI" id="CHEBI:57856"/>
        <dbReference type="ChEBI" id="CHEBI:59789"/>
        <dbReference type="ChEBI" id="CHEBI:74269"/>
        <dbReference type="ChEBI" id="CHEBI:74481"/>
        <dbReference type="EC" id="2.1.1.173"/>
    </reaction>
</comment>
<comment type="catalytic activity">
    <reaction evidence="1">
        <text>guanosine(2069) in 23S rRNA + S-adenosyl-L-methionine = N(2)-methylguanosine(2069) in 23S rRNA + S-adenosyl-L-homocysteine + H(+)</text>
        <dbReference type="Rhea" id="RHEA:43772"/>
        <dbReference type="Rhea" id="RHEA-COMP:10688"/>
        <dbReference type="Rhea" id="RHEA-COMP:10689"/>
        <dbReference type="ChEBI" id="CHEBI:15378"/>
        <dbReference type="ChEBI" id="CHEBI:57856"/>
        <dbReference type="ChEBI" id="CHEBI:59789"/>
        <dbReference type="ChEBI" id="CHEBI:74269"/>
        <dbReference type="ChEBI" id="CHEBI:74481"/>
        <dbReference type="EC" id="2.1.1.264"/>
    </reaction>
</comment>
<comment type="subcellular location">
    <subcellularLocation>
        <location evidence="1">Cytoplasm</location>
    </subcellularLocation>
</comment>
<comment type="similarity">
    <text evidence="1">Belongs to the methyltransferase superfamily. RlmKL family.</text>
</comment>
<feature type="chain" id="PRO_0000366734" description="Ribosomal RNA large subunit methyltransferase K/L">
    <location>
        <begin position="1"/>
        <end position="729"/>
    </location>
</feature>
<feature type="domain" description="THUMP" evidence="1">
    <location>
        <begin position="47"/>
        <end position="158"/>
    </location>
</feature>
<organism>
    <name type="scientific">Dichelobacter nodosus (strain VCS1703A)</name>
    <dbReference type="NCBI Taxonomy" id="246195"/>
    <lineage>
        <taxon>Bacteria</taxon>
        <taxon>Pseudomonadati</taxon>
        <taxon>Pseudomonadota</taxon>
        <taxon>Gammaproteobacteria</taxon>
        <taxon>Cardiobacteriales</taxon>
        <taxon>Cardiobacteriaceae</taxon>
        <taxon>Dichelobacter</taxon>
    </lineage>
</organism>
<name>RLMKL_DICNV</name>
<gene>
    <name evidence="1" type="primary">rlmL</name>
    <name type="ordered locus">DNO_1316</name>
</gene>
<keyword id="KW-0963">Cytoplasm</keyword>
<keyword id="KW-0489">Methyltransferase</keyword>
<keyword id="KW-1185">Reference proteome</keyword>
<keyword id="KW-0694">RNA-binding</keyword>
<keyword id="KW-0698">rRNA processing</keyword>
<keyword id="KW-0949">S-adenosyl-L-methionine</keyword>
<keyword id="KW-0808">Transferase</keyword>
<dbReference type="EC" id="2.1.1.173" evidence="1"/>
<dbReference type="EC" id="2.1.1.264" evidence="1"/>
<dbReference type="EMBL" id="CP000513">
    <property type="protein sequence ID" value="ABQ13113.1"/>
    <property type="molecule type" value="Genomic_DNA"/>
</dbReference>
<dbReference type="RefSeq" id="WP_012031600.1">
    <property type="nucleotide sequence ID" value="NC_009446.1"/>
</dbReference>
<dbReference type="SMR" id="A5EX48"/>
<dbReference type="STRING" id="246195.DNO_1316"/>
<dbReference type="KEGG" id="dno:DNO_1316"/>
<dbReference type="eggNOG" id="COG0116">
    <property type="taxonomic scope" value="Bacteria"/>
</dbReference>
<dbReference type="eggNOG" id="COG1092">
    <property type="taxonomic scope" value="Bacteria"/>
</dbReference>
<dbReference type="HOGENOM" id="CLU_014042_2_0_6"/>
<dbReference type="OrthoDB" id="9809404at2"/>
<dbReference type="Proteomes" id="UP000000248">
    <property type="component" value="Chromosome"/>
</dbReference>
<dbReference type="GO" id="GO:0005737">
    <property type="term" value="C:cytoplasm"/>
    <property type="evidence" value="ECO:0007669"/>
    <property type="project" value="UniProtKB-SubCell"/>
</dbReference>
<dbReference type="GO" id="GO:0052915">
    <property type="term" value="F:23S rRNA (guanine(2445)-N(2))-methyltransferase activity"/>
    <property type="evidence" value="ECO:0007669"/>
    <property type="project" value="UniProtKB-UniRule"/>
</dbReference>
<dbReference type="GO" id="GO:0003723">
    <property type="term" value="F:RNA binding"/>
    <property type="evidence" value="ECO:0007669"/>
    <property type="project" value="UniProtKB-KW"/>
</dbReference>
<dbReference type="GO" id="GO:0070043">
    <property type="term" value="F:rRNA (guanine-N7-)-methyltransferase activity"/>
    <property type="evidence" value="ECO:0007669"/>
    <property type="project" value="UniProtKB-UniRule"/>
</dbReference>
<dbReference type="CDD" id="cd02440">
    <property type="entry name" value="AdoMet_MTases"/>
    <property type="match status" value="1"/>
</dbReference>
<dbReference type="CDD" id="cd11715">
    <property type="entry name" value="THUMP_AdoMetMT"/>
    <property type="match status" value="1"/>
</dbReference>
<dbReference type="Gene3D" id="3.30.2130.30">
    <property type="match status" value="1"/>
</dbReference>
<dbReference type="Gene3D" id="3.30.750.80">
    <property type="entry name" value="RNA methyltransferase domain (HRMD) like"/>
    <property type="match status" value="1"/>
</dbReference>
<dbReference type="Gene3D" id="3.40.50.150">
    <property type="entry name" value="Vaccinia Virus protein VP39"/>
    <property type="match status" value="2"/>
</dbReference>
<dbReference type="HAMAP" id="MF_01858">
    <property type="entry name" value="23SrRNA_methyltr_KL"/>
    <property type="match status" value="1"/>
</dbReference>
<dbReference type="InterPro" id="IPR017244">
    <property type="entry name" value="23SrRNA_methyltr_KL"/>
</dbReference>
<dbReference type="InterPro" id="IPR002052">
    <property type="entry name" value="DNA_methylase_N6_adenine_CS"/>
</dbReference>
<dbReference type="InterPro" id="IPR000241">
    <property type="entry name" value="RlmKL-like_Mtase"/>
</dbReference>
<dbReference type="InterPro" id="IPR054170">
    <property type="entry name" value="RlmL_1st"/>
</dbReference>
<dbReference type="InterPro" id="IPR019614">
    <property type="entry name" value="SAM-dep_methyl-trfase"/>
</dbReference>
<dbReference type="InterPro" id="IPR029063">
    <property type="entry name" value="SAM-dependent_MTases_sf"/>
</dbReference>
<dbReference type="InterPro" id="IPR004114">
    <property type="entry name" value="THUMP_dom"/>
</dbReference>
<dbReference type="NCBIfam" id="NF008748">
    <property type="entry name" value="PRK11783.1"/>
    <property type="match status" value="1"/>
</dbReference>
<dbReference type="PANTHER" id="PTHR47313">
    <property type="entry name" value="RIBOSOMAL RNA LARGE SUBUNIT METHYLTRANSFERASE K/L"/>
    <property type="match status" value="1"/>
</dbReference>
<dbReference type="PANTHER" id="PTHR47313:SF1">
    <property type="entry name" value="RIBOSOMAL RNA LARGE SUBUNIT METHYLTRANSFERASE K_L"/>
    <property type="match status" value="1"/>
</dbReference>
<dbReference type="Pfam" id="PF10672">
    <property type="entry name" value="Methyltrans_SAM"/>
    <property type="match status" value="1"/>
</dbReference>
<dbReference type="Pfam" id="PF22020">
    <property type="entry name" value="RlmL_1st"/>
    <property type="match status" value="1"/>
</dbReference>
<dbReference type="Pfam" id="PF02926">
    <property type="entry name" value="THUMP"/>
    <property type="match status" value="1"/>
</dbReference>
<dbReference type="Pfam" id="PF01170">
    <property type="entry name" value="UPF0020"/>
    <property type="match status" value="1"/>
</dbReference>
<dbReference type="PIRSF" id="PIRSF037618">
    <property type="entry name" value="RNA_Mtase_bacteria_prd"/>
    <property type="match status" value="1"/>
</dbReference>
<dbReference type="SMART" id="SM00981">
    <property type="entry name" value="THUMP"/>
    <property type="match status" value="1"/>
</dbReference>
<dbReference type="SUPFAM" id="SSF53335">
    <property type="entry name" value="S-adenosyl-L-methionine-dependent methyltransferases"/>
    <property type="match status" value="2"/>
</dbReference>
<dbReference type="PROSITE" id="PS51165">
    <property type="entry name" value="THUMP"/>
    <property type="match status" value="1"/>
</dbReference>